<reference key="1">
    <citation type="journal article" date="2005" name="Science">
        <title>The transcriptional landscape of the mammalian genome.</title>
        <authorList>
            <person name="Carninci P."/>
            <person name="Kasukawa T."/>
            <person name="Katayama S."/>
            <person name="Gough J."/>
            <person name="Frith M.C."/>
            <person name="Maeda N."/>
            <person name="Oyama R."/>
            <person name="Ravasi T."/>
            <person name="Lenhard B."/>
            <person name="Wells C."/>
            <person name="Kodzius R."/>
            <person name="Shimokawa K."/>
            <person name="Bajic V.B."/>
            <person name="Brenner S.E."/>
            <person name="Batalov S."/>
            <person name="Forrest A.R."/>
            <person name="Zavolan M."/>
            <person name="Davis M.J."/>
            <person name="Wilming L.G."/>
            <person name="Aidinis V."/>
            <person name="Allen J.E."/>
            <person name="Ambesi-Impiombato A."/>
            <person name="Apweiler R."/>
            <person name="Aturaliya R.N."/>
            <person name="Bailey T.L."/>
            <person name="Bansal M."/>
            <person name="Baxter L."/>
            <person name="Beisel K.W."/>
            <person name="Bersano T."/>
            <person name="Bono H."/>
            <person name="Chalk A.M."/>
            <person name="Chiu K.P."/>
            <person name="Choudhary V."/>
            <person name="Christoffels A."/>
            <person name="Clutterbuck D.R."/>
            <person name="Crowe M.L."/>
            <person name="Dalla E."/>
            <person name="Dalrymple B.P."/>
            <person name="de Bono B."/>
            <person name="Della Gatta G."/>
            <person name="di Bernardo D."/>
            <person name="Down T."/>
            <person name="Engstrom P."/>
            <person name="Fagiolini M."/>
            <person name="Faulkner G."/>
            <person name="Fletcher C.F."/>
            <person name="Fukushima T."/>
            <person name="Furuno M."/>
            <person name="Futaki S."/>
            <person name="Gariboldi M."/>
            <person name="Georgii-Hemming P."/>
            <person name="Gingeras T.R."/>
            <person name="Gojobori T."/>
            <person name="Green R.E."/>
            <person name="Gustincich S."/>
            <person name="Harbers M."/>
            <person name="Hayashi Y."/>
            <person name="Hensch T.K."/>
            <person name="Hirokawa N."/>
            <person name="Hill D."/>
            <person name="Huminiecki L."/>
            <person name="Iacono M."/>
            <person name="Ikeo K."/>
            <person name="Iwama A."/>
            <person name="Ishikawa T."/>
            <person name="Jakt M."/>
            <person name="Kanapin A."/>
            <person name="Katoh M."/>
            <person name="Kawasawa Y."/>
            <person name="Kelso J."/>
            <person name="Kitamura H."/>
            <person name="Kitano H."/>
            <person name="Kollias G."/>
            <person name="Krishnan S.P."/>
            <person name="Kruger A."/>
            <person name="Kummerfeld S.K."/>
            <person name="Kurochkin I.V."/>
            <person name="Lareau L.F."/>
            <person name="Lazarevic D."/>
            <person name="Lipovich L."/>
            <person name="Liu J."/>
            <person name="Liuni S."/>
            <person name="McWilliam S."/>
            <person name="Madan Babu M."/>
            <person name="Madera M."/>
            <person name="Marchionni L."/>
            <person name="Matsuda H."/>
            <person name="Matsuzawa S."/>
            <person name="Miki H."/>
            <person name="Mignone F."/>
            <person name="Miyake S."/>
            <person name="Morris K."/>
            <person name="Mottagui-Tabar S."/>
            <person name="Mulder N."/>
            <person name="Nakano N."/>
            <person name="Nakauchi H."/>
            <person name="Ng P."/>
            <person name="Nilsson R."/>
            <person name="Nishiguchi S."/>
            <person name="Nishikawa S."/>
            <person name="Nori F."/>
            <person name="Ohara O."/>
            <person name="Okazaki Y."/>
            <person name="Orlando V."/>
            <person name="Pang K.C."/>
            <person name="Pavan W.J."/>
            <person name="Pavesi G."/>
            <person name="Pesole G."/>
            <person name="Petrovsky N."/>
            <person name="Piazza S."/>
            <person name="Reed J."/>
            <person name="Reid J.F."/>
            <person name="Ring B.Z."/>
            <person name="Ringwald M."/>
            <person name="Rost B."/>
            <person name="Ruan Y."/>
            <person name="Salzberg S.L."/>
            <person name="Sandelin A."/>
            <person name="Schneider C."/>
            <person name="Schoenbach C."/>
            <person name="Sekiguchi K."/>
            <person name="Semple C.A."/>
            <person name="Seno S."/>
            <person name="Sessa L."/>
            <person name="Sheng Y."/>
            <person name="Shibata Y."/>
            <person name="Shimada H."/>
            <person name="Shimada K."/>
            <person name="Silva D."/>
            <person name="Sinclair B."/>
            <person name="Sperling S."/>
            <person name="Stupka E."/>
            <person name="Sugiura K."/>
            <person name="Sultana R."/>
            <person name="Takenaka Y."/>
            <person name="Taki K."/>
            <person name="Tammoja K."/>
            <person name="Tan S.L."/>
            <person name="Tang S."/>
            <person name="Taylor M.S."/>
            <person name="Tegner J."/>
            <person name="Teichmann S.A."/>
            <person name="Ueda H.R."/>
            <person name="van Nimwegen E."/>
            <person name="Verardo R."/>
            <person name="Wei C.L."/>
            <person name="Yagi K."/>
            <person name="Yamanishi H."/>
            <person name="Zabarovsky E."/>
            <person name="Zhu S."/>
            <person name="Zimmer A."/>
            <person name="Hide W."/>
            <person name="Bult C."/>
            <person name="Grimmond S.M."/>
            <person name="Teasdale R.D."/>
            <person name="Liu E.T."/>
            <person name="Brusic V."/>
            <person name="Quackenbush J."/>
            <person name="Wahlestedt C."/>
            <person name="Mattick J.S."/>
            <person name="Hume D.A."/>
            <person name="Kai C."/>
            <person name="Sasaki D."/>
            <person name="Tomaru Y."/>
            <person name="Fukuda S."/>
            <person name="Kanamori-Katayama M."/>
            <person name="Suzuki M."/>
            <person name="Aoki J."/>
            <person name="Arakawa T."/>
            <person name="Iida J."/>
            <person name="Imamura K."/>
            <person name="Itoh M."/>
            <person name="Kato T."/>
            <person name="Kawaji H."/>
            <person name="Kawagashira N."/>
            <person name="Kawashima T."/>
            <person name="Kojima M."/>
            <person name="Kondo S."/>
            <person name="Konno H."/>
            <person name="Nakano K."/>
            <person name="Ninomiya N."/>
            <person name="Nishio T."/>
            <person name="Okada M."/>
            <person name="Plessy C."/>
            <person name="Shibata K."/>
            <person name="Shiraki T."/>
            <person name="Suzuki S."/>
            <person name="Tagami M."/>
            <person name="Waki K."/>
            <person name="Watahiki A."/>
            <person name="Okamura-Oho Y."/>
            <person name="Suzuki H."/>
            <person name="Kawai J."/>
            <person name="Hayashizaki Y."/>
        </authorList>
    </citation>
    <scope>NUCLEOTIDE SEQUENCE [LARGE SCALE MRNA] (ISOFORMS 2 AND 3)</scope>
    <scope>NUCLEOTIDE SEQUENCE [LARGE SCALE MRNA] OF 1-1393 (ISOFORM 1)</scope>
    <source>
        <strain>C57BL/6J</strain>
        <tissue>Eye</tissue>
        <tissue>Head</tissue>
        <tissue>Heart</tissue>
        <tissue>Liver</tissue>
    </source>
</reference>
<reference key="2">
    <citation type="journal article" date="2004" name="DNA Res.">
        <title>Prediction of the coding sequences of mouse homologues of KIAA gene: IV. The complete nucleotide sequences of 500 mouse KIAA-homologous cDNAs identified by screening of terminal sequences of cDNA clones randomly sampled from size-fractionated libraries.</title>
        <authorList>
            <person name="Okazaki N."/>
            <person name="Kikuno R."/>
            <person name="Ohara R."/>
            <person name="Inamoto S."/>
            <person name="Koseki H."/>
            <person name="Hiraoka S."/>
            <person name="Saga Y."/>
            <person name="Seino S."/>
            <person name="Nishimura M."/>
            <person name="Kaisho T."/>
            <person name="Hoshino K."/>
            <person name="Kitamura H."/>
            <person name="Nagase T."/>
            <person name="Ohara O."/>
            <person name="Koga H."/>
        </authorList>
    </citation>
    <scope>NUCLEOTIDE SEQUENCE [LARGE SCALE MRNA] (ISOFORM 4)</scope>
</reference>
<reference key="3">
    <citation type="submission" date="2009-01" db="UniProtKB">
        <authorList>
            <person name="Lubec G."/>
            <person name="Sunyer B."/>
            <person name="Chen W.-Q."/>
        </authorList>
    </citation>
    <scope>PROTEIN SEQUENCE OF 1424-1438</scope>
    <scope>IDENTIFICATION BY MASS SPECTROMETRY</scope>
    <source>
        <strain>OF1</strain>
        <tissue>Hippocampus</tissue>
    </source>
</reference>
<evidence type="ECO:0000250" key="1">
    <source>
        <dbReference type="UniProtKB" id="Q8IYD8"/>
    </source>
</evidence>
<evidence type="ECO:0000255" key="2">
    <source>
        <dbReference type="PROSITE-ProRule" id="PRU00541"/>
    </source>
</evidence>
<evidence type="ECO:0000255" key="3">
    <source>
        <dbReference type="PROSITE-ProRule" id="PRU00542"/>
    </source>
</evidence>
<evidence type="ECO:0000256" key="4">
    <source>
        <dbReference type="SAM" id="MobiDB-lite"/>
    </source>
</evidence>
<evidence type="ECO:0000303" key="5">
    <source>
    </source>
</evidence>
<evidence type="ECO:0000303" key="6">
    <source>
    </source>
</evidence>
<evidence type="ECO:0000305" key="7"/>
<proteinExistence type="evidence at protein level"/>
<sequence>MSGRQRTLFQTWGPSLVRGSGDSGCGQPRSPAMAEALPEEDDEVLLVAAYEAERQLDPGDGGFCAAAGALWIYPTNCPVRDYQLDISRSALFCNTLVCLPTGLGKTFIAAVVMYNFYRWFPSGKVVFMAPTKPLVTQQMEACFHVMGIPQSHMAEMTGSTQAVNRKEIWSSRRVLFLTPQVMVNDLTRGAVPATHVKCLVVDEAHKALGNYAYCQVVRELVKYTTHFRILALSATPGSDIKAVQQVITNLLIGKIELRSEESPDILPYSHERRVEKLVVPLGEELGAIQKTYIQILETFASSLIHRNVLMKRDIPNLTKYQIILARDQFRKNPSPNIVGIQQGIIEGEFALCISLYHGYELLQQMGMRSLYFFLSGIMDGTKGMTRARNELSRNEDFMKLYTHLQSAFAPASTSDASAFQRGNKEKKFVYSHPKLKKLEEVILEHFKSWNAKATTEKKCHESRVMIFSSFRDSVEEIAEMLLQHRPVIRVMTFVGHASGKNTKGFTQKEQLQVVRQFRDGGYNTLVSTCVGEEGLDIGEVDLIICFDAQKSPIRLIQRMGRTGRKRQGRIVVILAEGREERTYNQSQSNKKNIYKAISGNRQVLRLYQGSPRMVPDKINPELHKMYITHGVYEPEKARSVQRRPFSSRGGIKASKSNKDGLLSEEEFNLWSRLYRLGDSDQVKGVALPQSHFPSLQEDRVIQDPTTRIHQLSLSEWSLWQDRPLPTHQVDHSDRCHHFISIMKMIEGMRHEEGECSYELKIRPFLQMEDVCSKYHAPRNGYNNVASVASSAHQKSSFRPSVDAGGSLTVIESEEEHADTVKQRDSKWTKITSLREKPCRAGRKGQTCEHSEGEGEDGDAGSSDADGQSPAEADSQVDPPSGERMADVGGISILGAVTEEDNHPGTLQMECQVTNKSCARYSLDSGYSSFSDEKSVSSNLFLPLEEELFTDRAAEQFYNCRPMTEDVLANVERFLSRSPPSLSGLSDLVYDVTQGCEFDNASCSPYPEHEHSPRPVSPASHSAGNSQQNLESNSAKRISHPTEKYCLPGTTHNKVSDRPSFCESDSEGHNIKYQNSGSNSCAQIQADLENNFVDKNSHDDSEPPVLFTDEDESLLLFEDDFKNIEDGPEELNGASLPPFNSISQPLRVSGKTLTSEMPPVSHFLISDELLLDDDSEPEDQIVCGAKSWKCQEGVEDGQEELRTDGQTFDCSVDLFSVTFDLGFRCSSGSDDEMLAGASDRTRTLGAADVSGRHSDKEIKDAGGASGPLGRAISPIPTETAQWSPWAQNKEYASFHVASSSPVKQRVRSTPLSKSHASSKTGAHMLKTLDSTKEKAGGQGFKMALNPRLGHLGFSVEETKSSDQVFVHQSPRRTEVEHLTSESEDDVFLRKTKKPKRNVLKSPEDQKNNEVDSPIHAVKKPRVLRSELASSDDESENFGRTCPRLEHFKGRNRNIRKGSAAQKNRSQVKTMARRFLDDEAEVSGEDVDCVSADEEDESENEQDSSLLDFVNDRTQLSQAINDSEMRAIYMKSVRSPLMSTKYRMVREKRPNMNIFSQIPEQDENYLEDSFCVDEEESCKSQSSEEEISVDFNLTKDSFTDEDIRYKTRYAVKIKQMNKKQNYTRPRKKLSRIILPDDDSSEEENIPKDREHSVAGGHAAAEHTQQGQLWASGPSGSSVPPQVLSDPSWNQSSRQRLQVQPSITDAVPRTLNVKAQSHNKIKSASPPCTGVESRKEYGNHPVQLKADSQEHSDTSAAPCSTSLLHVAEGHTAPRHLQEGNRACILVDSREITTGLEVISSLRTVHGLQVEICPLNGCDYIVSSRMVVVRRSQSEMLSNTSKNKFIEQMQRLQSMFQRICVIVEKDREKAGDTSKKFRRTKCYDSLLTALVGAGIRILFSSGQEETADLLKELSLVEQRKNAGIHIPAVLNTSKLEALPFYLSIPGISYITALNMCHQFSSVKKMANSSPEEISTCAQVNHQKAEEIYKYIHYIFDMQMLPNDLNQERQKPDTCLTLGVAMKELS</sequence>
<accession>Q8BGE5</accession>
<accession>Q69ZF5</accession>
<accession>Q8BKB7</accession>
<accession>Q8BUA8</accession>
<keyword id="KW-0025">Alternative splicing</keyword>
<keyword id="KW-0067">ATP-binding</keyword>
<keyword id="KW-0903">Direct protein sequencing</keyword>
<keyword id="KW-0227">DNA damage</keyword>
<keyword id="KW-0234">DNA repair</keyword>
<keyword id="KW-0238">DNA-binding</keyword>
<keyword id="KW-0347">Helicase</keyword>
<keyword id="KW-0378">Hydrolase</keyword>
<keyword id="KW-0547">Nucleotide-binding</keyword>
<keyword id="KW-0539">Nucleus</keyword>
<keyword id="KW-0597">Phosphoprotein</keyword>
<keyword id="KW-1185">Reference proteome</keyword>
<organism>
    <name type="scientific">Mus musculus</name>
    <name type="common">Mouse</name>
    <dbReference type="NCBI Taxonomy" id="10090"/>
    <lineage>
        <taxon>Eukaryota</taxon>
        <taxon>Metazoa</taxon>
        <taxon>Chordata</taxon>
        <taxon>Craniata</taxon>
        <taxon>Vertebrata</taxon>
        <taxon>Euteleostomi</taxon>
        <taxon>Mammalia</taxon>
        <taxon>Eutheria</taxon>
        <taxon>Euarchontoglires</taxon>
        <taxon>Glires</taxon>
        <taxon>Rodentia</taxon>
        <taxon>Myomorpha</taxon>
        <taxon>Muroidea</taxon>
        <taxon>Muridae</taxon>
        <taxon>Murinae</taxon>
        <taxon>Mus</taxon>
        <taxon>Mus</taxon>
    </lineage>
</organism>
<protein>
    <recommendedName>
        <fullName>Fanconi anemia group M protein homolog</fullName>
        <shortName>Protein FACM</shortName>
        <ecNumber evidence="1">3.6.4.13</ecNumber>
    </recommendedName>
    <alternativeName>
        <fullName>ATP-dependent RNA helicase FANCM</fullName>
    </alternativeName>
</protein>
<dbReference type="EC" id="3.6.4.13" evidence="1"/>
<dbReference type="EMBL" id="AK050306">
    <property type="protein sequence ID" value="BAC34178.2"/>
    <property type="molecule type" value="mRNA"/>
</dbReference>
<dbReference type="EMBL" id="AK053715">
    <property type="protein sequence ID" value="BAC35487.1"/>
    <property type="molecule type" value="mRNA"/>
</dbReference>
<dbReference type="EMBL" id="AK084697">
    <property type="protein sequence ID" value="BAC39257.2"/>
    <property type="molecule type" value="mRNA"/>
</dbReference>
<dbReference type="EMBL" id="AK086395">
    <property type="protein sequence ID" value="BAC39660.1"/>
    <property type="molecule type" value="mRNA"/>
</dbReference>
<dbReference type="EMBL" id="AK173211">
    <property type="protein sequence ID" value="BAD32489.1"/>
    <property type="status" value="ALT_INIT"/>
    <property type="molecule type" value="mRNA"/>
</dbReference>
<dbReference type="CCDS" id="CCDS25941.1">
    <molecule id="Q8BGE5-1"/>
</dbReference>
<dbReference type="RefSeq" id="NP_001351376.1">
    <molecule id="Q8BGE5-4"/>
    <property type="nucleotide sequence ID" value="NM_001364447.1"/>
</dbReference>
<dbReference type="RefSeq" id="NP_849243.2">
    <molecule id="Q8BGE5-1"/>
    <property type="nucleotide sequence ID" value="NM_178912.4"/>
</dbReference>
<dbReference type="RefSeq" id="XP_006515407.1">
    <property type="nucleotide sequence ID" value="XM_006515344.3"/>
</dbReference>
<dbReference type="SMR" id="Q8BGE5"/>
<dbReference type="BioGRID" id="222708">
    <property type="interactions" value="4"/>
</dbReference>
<dbReference type="FunCoup" id="Q8BGE5">
    <property type="interactions" value="3333"/>
</dbReference>
<dbReference type="STRING" id="10090.ENSMUSP00000054797"/>
<dbReference type="ChEMBL" id="CHEMBL2176806"/>
<dbReference type="GlyGen" id="Q8BGE5">
    <property type="glycosylation" value="2 sites, 1 N-linked glycan (1 site)"/>
</dbReference>
<dbReference type="iPTMnet" id="Q8BGE5"/>
<dbReference type="PhosphoSitePlus" id="Q8BGE5"/>
<dbReference type="jPOST" id="Q8BGE5"/>
<dbReference type="PaxDb" id="10090-ENSMUSP00000054797"/>
<dbReference type="ProteomicsDB" id="271863">
    <molecule id="Q8BGE5-1"/>
</dbReference>
<dbReference type="ProteomicsDB" id="271864">
    <molecule id="Q8BGE5-2"/>
</dbReference>
<dbReference type="ProteomicsDB" id="271865">
    <molecule id="Q8BGE5-3"/>
</dbReference>
<dbReference type="ProteomicsDB" id="271866">
    <molecule id="Q8BGE5-4"/>
</dbReference>
<dbReference type="Antibodypedia" id="23452">
    <property type="antibodies" value="220 antibodies from 30 providers"/>
</dbReference>
<dbReference type="DNASU" id="104806"/>
<dbReference type="Ensembl" id="ENSMUST00000058889.5">
    <molecule id="Q8BGE5-1"/>
    <property type="protein sequence ID" value="ENSMUSP00000054797.5"/>
    <property type="gene ID" value="ENSMUSG00000055884.9"/>
</dbReference>
<dbReference type="GeneID" id="104806"/>
<dbReference type="KEGG" id="mmu:104806"/>
<dbReference type="UCSC" id="uc007nrc.1">
    <molecule id="Q8BGE5-3"/>
    <property type="organism name" value="mouse"/>
</dbReference>
<dbReference type="UCSC" id="uc007nrd.1">
    <molecule id="Q8BGE5-2"/>
    <property type="organism name" value="mouse"/>
</dbReference>
<dbReference type="UCSC" id="uc007nrf.1">
    <molecule id="Q8BGE5-1"/>
    <property type="organism name" value="mouse"/>
</dbReference>
<dbReference type="AGR" id="MGI:2442306"/>
<dbReference type="CTD" id="57697"/>
<dbReference type="MGI" id="MGI:2442306">
    <property type="gene designation" value="Fancm"/>
</dbReference>
<dbReference type="VEuPathDB" id="HostDB:ENSMUSG00000055884"/>
<dbReference type="eggNOG" id="KOG0354">
    <property type="taxonomic scope" value="Eukaryota"/>
</dbReference>
<dbReference type="eggNOG" id="KOG0442">
    <property type="taxonomic scope" value="Eukaryota"/>
</dbReference>
<dbReference type="GeneTree" id="ENSGT00940000156480"/>
<dbReference type="HOGENOM" id="CLU_000801_1_0_1"/>
<dbReference type="InParanoid" id="Q8BGE5"/>
<dbReference type="OMA" id="MQMLPND"/>
<dbReference type="OrthoDB" id="6513042at2759"/>
<dbReference type="PhylomeDB" id="Q8BGE5"/>
<dbReference type="TreeFam" id="TF324610"/>
<dbReference type="Reactome" id="R-MMU-6783310">
    <property type="pathway name" value="Fanconi Anemia Pathway"/>
</dbReference>
<dbReference type="Reactome" id="R-MMU-9833482">
    <property type="pathway name" value="PKR-mediated signaling"/>
</dbReference>
<dbReference type="BioGRID-ORCS" id="104806">
    <property type="hits" value="36 hits in 114 CRISPR screens"/>
</dbReference>
<dbReference type="PRO" id="PR:Q8BGE5"/>
<dbReference type="Proteomes" id="UP000000589">
    <property type="component" value="Chromosome 12"/>
</dbReference>
<dbReference type="RNAct" id="Q8BGE5">
    <property type="molecule type" value="protein"/>
</dbReference>
<dbReference type="Bgee" id="ENSMUSG00000055884">
    <property type="expression patterns" value="Expressed in embryonic post-anal tail and 155 other cell types or tissues"/>
</dbReference>
<dbReference type="ExpressionAtlas" id="Q8BGE5">
    <property type="expression patterns" value="baseline and differential"/>
</dbReference>
<dbReference type="GO" id="GO:0000785">
    <property type="term" value="C:chromatin"/>
    <property type="evidence" value="ECO:0007669"/>
    <property type="project" value="Ensembl"/>
</dbReference>
<dbReference type="GO" id="GO:0071821">
    <property type="term" value="C:FANCM-MHF complex"/>
    <property type="evidence" value="ECO:0000250"/>
    <property type="project" value="UniProtKB"/>
</dbReference>
<dbReference type="GO" id="GO:0043240">
    <property type="term" value="C:Fanconi anaemia nuclear complex"/>
    <property type="evidence" value="ECO:0000250"/>
    <property type="project" value="UniProtKB"/>
</dbReference>
<dbReference type="GO" id="GO:0005654">
    <property type="term" value="C:nucleoplasm"/>
    <property type="evidence" value="ECO:0007669"/>
    <property type="project" value="Ensembl"/>
</dbReference>
<dbReference type="GO" id="GO:0043138">
    <property type="term" value="F:3'-5' DNA helicase activity"/>
    <property type="evidence" value="ECO:0007669"/>
    <property type="project" value="InterPro"/>
</dbReference>
<dbReference type="GO" id="GO:0005524">
    <property type="term" value="F:ATP binding"/>
    <property type="evidence" value="ECO:0007669"/>
    <property type="project" value="UniProtKB-KW"/>
</dbReference>
<dbReference type="GO" id="GO:0016887">
    <property type="term" value="F:ATP hydrolysis activity"/>
    <property type="evidence" value="ECO:0007669"/>
    <property type="project" value="RHEA"/>
</dbReference>
<dbReference type="GO" id="GO:0003682">
    <property type="term" value="F:chromatin binding"/>
    <property type="evidence" value="ECO:0000250"/>
    <property type="project" value="UniProtKB"/>
</dbReference>
<dbReference type="GO" id="GO:0003677">
    <property type="term" value="F:DNA binding"/>
    <property type="evidence" value="ECO:0007669"/>
    <property type="project" value="UniProtKB-KW"/>
</dbReference>
<dbReference type="GO" id="GO:0004518">
    <property type="term" value="F:nuclease activity"/>
    <property type="evidence" value="ECO:0007669"/>
    <property type="project" value="InterPro"/>
</dbReference>
<dbReference type="GO" id="GO:0003724">
    <property type="term" value="F:RNA helicase activity"/>
    <property type="evidence" value="ECO:0007669"/>
    <property type="project" value="UniProtKB-EC"/>
</dbReference>
<dbReference type="GO" id="GO:0036297">
    <property type="term" value="P:interstrand cross-link repair"/>
    <property type="evidence" value="ECO:0007669"/>
    <property type="project" value="Ensembl"/>
</dbReference>
<dbReference type="GO" id="GO:1902527">
    <property type="term" value="P:positive regulation of protein monoubiquitination"/>
    <property type="evidence" value="ECO:0007669"/>
    <property type="project" value="Ensembl"/>
</dbReference>
<dbReference type="GO" id="GO:0031297">
    <property type="term" value="P:replication fork processing"/>
    <property type="evidence" value="ECO:0000250"/>
    <property type="project" value="UniProtKB"/>
</dbReference>
<dbReference type="GO" id="GO:0000712">
    <property type="term" value="P:resolution of meiotic recombination intermediates"/>
    <property type="evidence" value="ECO:0000250"/>
    <property type="project" value="UniProtKB"/>
</dbReference>
<dbReference type="CDD" id="cd18033">
    <property type="entry name" value="DEXDc_FANCM"/>
    <property type="match status" value="1"/>
</dbReference>
<dbReference type="CDD" id="cd12091">
    <property type="entry name" value="FANCM_ID"/>
    <property type="match status" value="1"/>
</dbReference>
<dbReference type="CDD" id="cd18801">
    <property type="entry name" value="SF2_C_FANCM_Hef"/>
    <property type="match status" value="1"/>
</dbReference>
<dbReference type="CDD" id="cd20077">
    <property type="entry name" value="XPF_nuclease_FANCM"/>
    <property type="match status" value="1"/>
</dbReference>
<dbReference type="FunFam" id="3.40.50.300:FF:001333">
    <property type="entry name" value="FA complementation group M"/>
    <property type="match status" value="1"/>
</dbReference>
<dbReference type="FunFam" id="1.20.1320.20:FF:000001">
    <property type="entry name" value="Fanconi anemia, complementation group M"/>
    <property type="match status" value="1"/>
</dbReference>
<dbReference type="FunFam" id="3.40.50.300:FF:000861">
    <property type="entry name" value="Fanconi anemia, complementation group M"/>
    <property type="match status" value="1"/>
</dbReference>
<dbReference type="Gene3D" id="3.40.50.10130">
    <property type="match status" value="1"/>
</dbReference>
<dbReference type="Gene3D" id="1.10.150.20">
    <property type="entry name" value="5' to 3' exonuclease, C-terminal subdomain"/>
    <property type="match status" value="1"/>
</dbReference>
<dbReference type="Gene3D" id="1.20.1320.20">
    <property type="entry name" value="hef helicase domain"/>
    <property type="match status" value="1"/>
</dbReference>
<dbReference type="Gene3D" id="3.40.50.300">
    <property type="entry name" value="P-loop containing nucleotide triphosphate hydrolases"/>
    <property type="match status" value="2"/>
</dbReference>
<dbReference type="InterPro" id="IPR011545">
    <property type="entry name" value="DEAD/DEAH_box_helicase_dom"/>
</dbReference>
<dbReference type="InterPro" id="IPR006166">
    <property type="entry name" value="ERCC4_domain"/>
</dbReference>
<dbReference type="InterPro" id="IPR031879">
    <property type="entry name" value="FANCM-MHF-bd"/>
</dbReference>
<dbReference type="InterPro" id="IPR039686">
    <property type="entry name" value="FANCM/Mph1-like_ID"/>
</dbReference>
<dbReference type="InterPro" id="IPR044749">
    <property type="entry name" value="FANCM_DEXDc"/>
</dbReference>
<dbReference type="InterPro" id="IPR014001">
    <property type="entry name" value="Helicase_ATP-bd"/>
</dbReference>
<dbReference type="InterPro" id="IPR001650">
    <property type="entry name" value="Helicase_C-like"/>
</dbReference>
<dbReference type="InterPro" id="IPR027417">
    <property type="entry name" value="P-loop_NTPase"/>
</dbReference>
<dbReference type="InterPro" id="IPR011335">
    <property type="entry name" value="Restrct_endonuc-II-like"/>
</dbReference>
<dbReference type="InterPro" id="IPR010994">
    <property type="entry name" value="RuvA_2-like"/>
</dbReference>
<dbReference type="InterPro" id="IPR047418">
    <property type="entry name" value="XPF_nuclease_FANCM"/>
</dbReference>
<dbReference type="PANTHER" id="PTHR14025">
    <property type="entry name" value="FANCONI ANEMIA GROUP M FANCM FAMILY MEMBER"/>
    <property type="match status" value="1"/>
</dbReference>
<dbReference type="PANTHER" id="PTHR14025:SF20">
    <property type="entry name" value="FANCONI ANEMIA GROUP M PROTEIN"/>
    <property type="match status" value="1"/>
</dbReference>
<dbReference type="Pfam" id="PF00270">
    <property type="entry name" value="DEAD"/>
    <property type="match status" value="1"/>
</dbReference>
<dbReference type="Pfam" id="PF02732">
    <property type="entry name" value="ERCC4"/>
    <property type="match status" value="1"/>
</dbReference>
<dbReference type="Pfam" id="PF16783">
    <property type="entry name" value="FANCM-MHF_bd"/>
    <property type="match status" value="1"/>
</dbReference>
<dbReference type="Pfam" id="PF00271">
    <property type="entry name" value="Helicase_C"/>
    <property type="match status" value="1"/>
</dbReference>
<dbReference type="SMART" id="SM00487">
    <property type="entry name" value="DEXDc"/>
    <property type="match status" value="1"/>
</dbReference>
<dbReference type="SMART" id="SM00891">
    <property type="entry name" value="ERCC4"/>
    <property type="match status" value="1"/>
</dbReference>
<dbReference type="SMART" id="SM00490">
    <property type="entry name" value="HELICc"/>
    <property type="match status" value="1"/>
</dbReference>
<dbReference type="SUPFAM" id="SSF52540">
    <property type="entry name" value="P-loop containing nucleoside triphosphate hydrolases"/>
    <property type="match status" value="1"/>
</dbReference>
<dbReference type="SUPFAM" id="SSF52980">
    <property type="entry name" value="Restriction endonuclease-like"/>
    <property type="match status" value="1"/>
</dbReference>
<dbReference type="SUPFAM" id="SSF47781">
    <property type="entry name" value="RuvA domain 2-like"/>
    <property type="match status" value="1"/>
</dbReference>
<dbReference type="PROSITE" id="PS51192">
    <property type="entry name" value="HELICASE_ATP_BIND_1"/>
    <property type="match status" value="1"/>
</dbReference>
<dbReference type="PROSITE" id="PS51194">
    <property type="entry name" value="HELICASE_CTER"/>
    <property type="match status" value="1"/>
</dbReference>
<feature type="chain" id="PRO_0000055177" description="Fanconi anemia group M protein homolog">
    <location>
        <begin position="1"/>
        <end position="2021"/>
    </location>
</feature>
<feature type="domain" description="Helicase ATP-binding" evidence="2">
    <location>
        <begin position="86"/>
        <end position="254"/>
    </location>
</feature>
<feature type="domain" description="Helicase C-terminal" evidence="3">
    <location>
        <begin position="437"/>
        <end position="612"/>
    </location>
</feature>
<feature type="region of interest" description="Disordered" evidence="4">
    <location>
        <begin position="638"/>
        <end position="657"/>
    </location>
</feature>
<feature type="region of interest" description="Disordered" evidence="4">
    <location>
        <begin position="837"/>
        <end position="886"/>
    </location>
</feature>
<feature type="region of interest" description="Disordered" evidence="4">
    <location>
        <begin position="1002"/>
        <end position="1049"/>
    </location>
</feature>
<feature type="region of interest" description="Disordered" evidence="4">
    <location>
        <begin position="1244"/>
        <end position="1273"/>
    </location>
</feature>
<feature type="region of interest" description="Disordered" evidence="4">
    <location>
        <begin position="1296"/>
        <end position="1319"/>
    </location>
</feature>
<feature type="region of interest" description="Disordered" evidence="4">
    <location>
        <begin position="1369"/>
        <end position="1441"/>
    </location>
</feature>
<feature type="region of interest" description="Disordered" evidence="4">
    <location>
        <begin position="1447"/>
        <end position="1466"/>
    </location>
</feature>
<feature type="region of interest" description="Disordered" evidence="4">
    <location>
        <begin position="1615"/>
        <end position="1700"/>
    </location>
</feature>
<feature type="region of interest" description="Interaction with FAAP24" evidence="1">
    <location>
        <begin position="1689"/>
        <end position="2009"/>
    </location>
</feature>
<feature type="region of interest" description="Disordered" evidence="4">
    <location>
        <begin position="1712"/>
        <end position="1732"/>
    </location>
</feature>
<feature type="short sequence motif" description="DEAH box" evidence="2">
    <location>
        <begin position="202"/>
        <end position="205"/>
    </location>
</feature>
<feature type="compositionally biased region" description="Polar residues" evidence="4">
    <location>
        <begin position="1018"/>
        <end position="1035"/>
    </location>
</feature>
<feature type="compositionally biased region" description="Basic and acidic residues" evidence="4">
    <location>
        <begin position="1249"/>
        <end position="1259"/>
    </location>
</feature>
<feature type="compositionally biased region" description="Basic and acidic residues" evidence="4">
    <location>
        <begin position="1370"/>
        <end position="1379"/>
    </location>
</feature>
<feature type="compositionally biased region" description="Basic residues" evidence="4">
    <location>
        <begin position="1388"/>
        <end position="1397"/>
    </location>
</feature>
<feature type="compositionally biased region" description="Low complexity" evidence="4">
    <location>
        <begin position="1669"/>
        <end position="1682"/>
    </location>
</feature>
<feature type="compositionally biased region" description="Polar residues" evidence="4">
    <location>
        <begin position="1684"/>
        <end position="1700"/>
    </location>
</feature>
<feature type="binding site" evidence="2">
    <location>
        <begin position="99"/>
        <end position="106"/>
    </location>
    <ligand>
        <name>ATP</name>
        <dbReference type="ChEBI" id="CHEBI:30616"/>
    </ligand>
</feature>
<feature type="modified residue" description="Phosphoserine" evidence="1">
    <location>
        <position position="30"/>
    </location>
</feature>
<feature type="modified residue" description="Phosphoserine" evidence="1">
    <location>
        <position position="1637"/>
    </location>
</feature>
<feature type="splice variant" id="VSP_015991" description="In isoform 4." evidence="5">
    <location>
        <begin position="1"/>
        <end position="741"/>
    </location>
</feature>
<feature type="splice variant" id="VSP_015992" description="In isoform 3." evidence="6">
    <original>NKEKKFVYSHP</original>
    <variation>LVFQGKLWSFT</variation>
    <location>
        <begin position="423"/>
        <end position="433"/>
    </location>
</feature>
<feature type="splice variant" id="VSP_015993" description="In isoform 3." evidence="6">
    <location>
        <begin position="434"/>
        <end position="2021"/>
    </location>
</feature>
<feature type="splice variant" id="VSP_015994" description="In isoform 2." evidence="6">
    <original>I</original>
    <variation>E</variation>
    <location>
        <position position="651"/>
    </location>
</feature>
<feature type="splice variant" id="VSP_015995" description="In isoform 2." evidence="6">
    <location>
        <begin position="652"/>
        <end position="2021"/>
    </location>
</feature>
<name>FANCM_MOUSE</name>
<gene>
    <name type="primary">Fancm</name>
    <name type="synonym">Kiaa1596</name>
</gene>
<comment type="function">
    <text evidence="1">DNA-dependent ATPase component of the Fanconi anemia (FA) core complex. Required for the normal activation of the FA pathway, leading to monoubiquitination of the FANCI-FANCD2 complex in response to DNA damage, cellular resistance to DNA cross-linking drugs, and prevention of chromosomal breakage. In complex with CENPS and CENPX, binds double-stranded DNA (dsDNA), fork-structured DNA (fsDNA) and Holliday junction substrates. Its ATP-dependent DNA branch migration activity can process branched DNA structures such as a movable replication fork. This activity is strongly stimulated in the presence of CENPS and CENPX. In complex with FAAP24, efficiently binds to single-strand DNA (ssDNA), splayed-arm DNA, and 3'-flap substrates. In vitro, on its own, strongly binds ssDNA oligomers and weakly fsDNA, but does not bind to dsDNA.</text>
</comment>
<comment type="catalytic activity">
    <reaction evidence="1">
        <text>ATP + H2O = ADP + phosphate + H(+)</text>
        <dbReference type="Rhea" id="RHEA:13065"/>
        <dbReference type="ChEBI" id="CHEBI:15377"/>
        <dbReference type="ChEBI" id="CHEBI:15378"/>
        <dbReference type="ChEBI" id="CHEBI:30616"/>
        <dbReference type="ChEBI" id="CHEBI:43474"/>
        <dbReference type="ChEBI" id="CHEBI:456216"/>
        <dbReference type="EC" id="3.6.4.13"/>
    </reaction>
</comment>
<comment type="subunit">
    <text evidence="1">Component of the Fanconi anemia (FA) core complex, which consists of CENPS, CENPX, FANCA, FANCB, FANCC, FANCE, FANCF, FANCG, FANCL, FANCM, FAAP24 and FAAP100. The FA core complex associates with Bloom syndrome (BLM) complex, which consists of at least BLM, DNA topoisomerase 3-alpha/TOP3A, RMI1/BLAP75, RPA1/RPA70 and RPA2/RPA32. This supercomplex between FA and BLM complexes has been called BRAFT. Forms a discrete complex with CENPS and CENPX, called FANCM-MHF; this interaction stimulates DNA binding and replication fork remodeling by FANCM and stabilizes the binding partners. Forms a heterodimer with FAAP24; this interaction increases FANCM single-stranded DNA-binding activity.</text>
</comment>
<comment type="subcellular location">
    <subcellularLocation>
        <location evidence="1">Nucleus</location>
    </subcellularLocation>
</comment>
<comment type="alternative products">
    <event type="alternative splicing"/>
    <isoform>
        <id>Q8BGE5-1</id>
        <name>1</name>
        <sequence type="displayed"/>
    </isoform>
    <isoform>
        <id>Q8BGE5-2</id>
        <name>2</name>
        <sequence type="described" ref="VSP_015994 VSP_015995"/>
    </isoform>
    <isoform>
        <id>Q8BGE5-3</id>
        <name>3</name>
        <sequence type="described" ref="VSP_015992 VSP_015993"/>
    </isoform>
    <isoform>
        <id>Q8BGE5-4</id>
        <name>4</name>
        <sequence type="described" ref="VSP_015991"/>
    </isoform>
</comment>
<comment type="PTM">
    <text evidence="1">Phosphorylated; hyperphosphorylated in response to genotoxic stress.</text>
</comment>
<comment type="similarity">
    <text evidence="7">Belongs to the DEAD box helicase family. DEAH subfamily. FANCM sub-subfamily.</text>
</comment>
<comment type="sequence caution" evidence="7">
    <conflict type="erroneous initiation">
        <sequence resource="EMBL-CDS" id="BAD32489"/>
    </conflict>
    <text>Extended N-terminus.</text>
</comment>